<protein>
    <recommendedName>
        <fullName evidence="1">3-ketoacyl-CoA thiolase</fullName>
        <ecNumber evidence="1">2.3.1.16</ecNumber>
    </recommendedName>
    <alternativeName>
        <fullName evidence="1">Acetyl-CoA acyltransferase</fullName>
    </alternativeName>
    <alternativeName>
        <fullName evidence="1">Beta-ketothiolase</fullName>
    </alternativeName>
    <alternativeName>
        <fullName evidence="1">Fatty acid oxidation complex subunit beta</fullName>
    </alternativeName>
</protein>
<reference key="1">
    <citation type="journal article" date="2008" name="BMC Genomics">
        <title>The genome sequence of the fish pathogen Aliivibrio salmonicida strain LFI1238 shows extensive evidence of gene decay.</title>
        <authorList>
            <person name="Hjerde E."/>
            <person name="Lorentzen M.S."/>
            <person name="Holden M.T."/>
            <person name="Seeger K."/>
            <person name="Paulsen S."/>
            <person name="Bason N."/>
            <person name="Churcher C."/>
            <person name="Harris D."/>
            <person name="Norbertczak H."/>
            <person name="Quail M.A."/>
            <person name="Sanders S."/>
            <person name="Thurston S."/>
            <person name="Parkhill J."/>
            <person name="Willassen N.P."/>
            <person name="Thomson N.R."/>
        </authorList>
    </citation>
    <scope>NUCLEOTIDE SEQUENCE [LARGE SCALE GENOMIC DNA]</scope>
    <source>
        <strain>LFI1238</strain>
    </source>
</reference>
<comment type="function">
    <text evidence="1">Catalyzes the final step of fatty acid oxidation in which acetyl-CoA is released and the CoA ester of a fatty acid two carbons shorter is formed.</text>
</comment>
<comment type="catalytic activity">
    <reaction evidence="1">
        <text>an acyl-CoA + acetyl-CoA = a 3-oxoacyl-CoA + CoA</text>
        <dbReference type="Rhea" id="RHEA:21564"/>
        <dbReference type="ChEBI" id="CHEBI:57287"/>
        <dbReference type="ChEBI" id="CHEBI:57288"/>
        <dbReference type="ChEBI" id="CHEBI:58342"/>
        <dbReference type="ChEBI" id="CHEBI:90726"/>
        <dbReference type="EC" id="2.3.1.16"/>
    </reaction>
</comment>
<comment type="pathway">
    <text evidence="1">Lipid metabolism; fatty acid beta-oxidation.</text>
</comment>
<comment type="subunit">
    <text evidence="1">Heterotetramer of two alpha chains (FadB) and two beta chains (FadA).</text>
</comment>
<comment type="subcellular location">
    <subcellularLocation>
        <location evidence="1">Cytoplasm</location>
    </subcellularLocation>
</comment>
<comment type="similarity">
    <text evidence="1">Belongs to the thiolase-like superfamily. Thiolase family.</text>
</comment>
<name>FADA_ALISL</name>
<dbReference type="EC" id="2.3.1.16" evidence="1"/>
<dbReference type="EMBL" id="FM178379">
    <property type="protein sequence ID" value="CAQ80657.1"/>
    <property type="molecule type" value="Genomic_DNA"/>
</dbReference>
<dbReference type="RefSeq" id="WP_012551374.1">
    <property type="nucleotide sequence ID" value="NC_011312.1"/>
</dbReference>
<dbReference type="SMR" id="B6EGU1"/>
<dbReference type="KEGG" id="vsa:VSAL_I2973"/>
<dbReference type="eggNOG" id="COG0183">
    <property type="taxonomic scope" value="Bacteria"/>
</dbReference>
<dbReference type="HOGENOM" id="CLU_031026_2_2_6"/>
<dbReference type="UniPathway" id="UPA00659"/>
<dbReference type="Proteomes" id="UP000001730">
    <property type="component" value="Chromosome 1"/>
</dbReference>
<dbReference type="GO" id="GO:0005737">
    <property type="term" value="C:cytoplasm"/>
    <property type="evidence" value="ECO:0007669"/>
    <property type="project" value="UniProtKB-SubCell"/>
</dbReference>
<dbReference type="GO" id="GO:0003988">
    <property type="term" value="F:acetyl-CoA C-acyltransferase activity"/>
    <property type="evidence" value="ECO:0007669"/>
    <property type="project" value="UniProtKB-UniRule"/>
</dbReference>
<dbReference type="GO" id="GO:0006635">
    <property type="term" value="P:fatty acid beta-oxidation"/>
    <property type="evidence" value="ECO:0007669"/>
    <property type="project" value="UniProtKB-UniRule"/>
</dbReference>
<dbReference type="GO" id="GO:0010124">
    <property type="term" value="P:phenylacetate catabolic process"/>
    <property type="evidence" value="ECO:0007669"/>
    <property type="project" value="TreeGrafter"/>
</dbReference>
<dbReference type="CDD" id="cd00751">
    <property type="entry name" value="thiolase"/>
    <property type="match status" value="1"/>
</dbReference>
<dbReference type="FunFam" id="3.40.47.10:FF:000010">
    <property type="entry name" value="Acetyl-CoA acetyltransferase (Thiolase)"/>
    <property type="match status" value="1"/>
</dbReference>
<dbReference type="Gene3D" id="3.40.47.10">
    <property type="match status" value="2"/>
</dbReference>
<dbReference type="HAMAP" id="MF_01620">
    <property type="entry name" value="FadA"/>
    <property type="match status" value="1"/>
</dbReference>
<dbReference type="InterPro" id="IPR012805">
    <property type="entry name" value="FadA"/>
</dbReference>
<dbReference type="InterPro" id="IPR002155">
    <property type="entry name" value="Thiolase"/>
</dbReference>
<dbReference type="InterPro" id="IPR016039">
    <property type="entry name" value="Thiolase-like"/>
</dbReference>
<dbReference type="InterPro" id="IPR050215">
    <property type="entry name" value="Thiolase-like_sf_Thiolase"/>
</dbReference>
<dbReference type="InterPro" id="IPR020615">
    <property type="entry name" value="Thiolase_acyl_enz_int_AS"/>
</dbReference>
<dbReference type="InterPro" id="IPR020610">
    <property type="entry name" value="Thiolase_AS"/>
</dbReference>
<dbReference type="InterPro" id="IPR020617">
    <property type="entry name" value="Thiolase_C"/>
</dbReference>
<dbReference type="InterPro" id="IPR020613">
    <property type="entry name" value="Thiolase_CS"/>
</dbReference>
<dbReference type="InterPro" id="IPR020616">
    <property type="entry name" value="Thiolase_N"/>
</dbReference>
<dbReference type="NCBIfam" id="TIGR01930">
    <property type="entry name" value="AcCoA-C-Actrans"/>
    <property type="match status" value="1"/>
</dbReference>
<dbReference type="NCBIfam" id="TIGR02445">
    <property type="entry name" value="fadA"/>
    <property type="match status" value="1"/>
</dbReference>
<dbReference type="NCBIfam" id="NF006510">
    <property type="entry name" value="PRK08947.1"/>
    <property type="match status" value="1"/>
</dbReference>
<dbReference type="PANTHER" id="PTHR43853:SF11">
    <property type="entry name" value="3-KETOACYL-COA THIOLASE FADA"/>
    <property type="match status" value="1"/>
</dbReference>
<dbReference type="PANTHER" id="PTHR43853">
    <property type="entry name" value="3-KETOACYL-COA THIOLASE, PEROXISOMAL"/>
    <property type="match status" value="1"/>
</dbReference>
<dbReference type="Pfam" id="PF02803">
    <property type="entry name" value="Thiolase_C"/>
    <property type="match status" value="1"/>
</dbReference>
<dbReference type="Pfam" id="PF00108">
    <property type="entry name" value="Thiolase_N"/>
    <property type="match status" value="1"/>
</dbReference>
<dbReference type="PIRSF" id="PIRSF000429">
    <property type="entry name" value="Ac-CoA_Ac_transf"/>
    <property type="match status" value="1"/>
</dbReference>
<dbReference type="SUPFAM" id="SSF53901">
    <property type="entry name" value="Thiolase-like"/>
    <property type="match status" value="2"/>
</dbReference>
<dbReference type="PROSITE" id="PS00098">
    <property type="entry name" value="THIOLASE_1"/>
    <property type="match status" value="1"/>
</dbReference>
<dbReference type="PROSITE" id="PS00737">
    <property type="entry name" value="THIOLASE_2"/>
    <property type="match status" value="1"/>
</dbReference>
<dbReference type="PROSITE" id="PS00099">
    <property type="entry name" value="THIOLASE_3"/>
    <property type="match status" value="1"/>
</dbReference>
<keyword id="KW-0012">Acyltransferase</keyword>
<keyword id="KW-0963">Cytoplasm</keyword>
<keyword id="KW-0276">Fatty acid metabolism</keyword>
<keyword id="KW-0442">Lipid degradation</keyword>
<keyword id="KW-0443">Lipid metabolism</keyword>
<keyword id="KW-0808">Transferase</keyword>
<sequence length="387" mass="41060">MKNVVIVDCIRTPMGRSKNGVFRHTRAEDLSAHLMKGLLERNPNVDPNQIEDIYWGCVQQTLEQGFNIARNASLLAGLPKSIAATTVNRLCGSSMQALHDASRAIMVGDADICIIGGVEHMGHVPMNHGVDFHSGLSKNVAKASGMMGLTAEMLGKMHGISREQQDAFAFASHQKAHRATIEGHFDSEILPMEGHDENGALTLVKHDEVIRPETTLEGLAALRPAFDPANGTVTAGSSSALSDGASAMLIMSEEKANELGLTIRAKIRSMAVSGCDPAIMGYGPVPATKKALKRAGLSIDDIDLFELNEAFAAQSLPCIKDLGLFDVMEEKINLNGGAIALGHPLGCSGSRIATTLINNMERTGAKLGVATMCIGLGQGIATVFERP</sequence>
<evidence type="ECO:0000255" key="1">
    <source>
        <dbReference type="HAMAP-Rule" id="MF_01620"/>
    </source>
</evidence>
<gene>
    <name evidence="1" type="primary">fadA</name>
    <name type="ordered locus">VSAL_I2973</name>
</gene>
<organism>
    <name type="scientific">Aliivibrio salmonicida (strain LFI1238)</name>
    <name type="common">Vibrio salmonicida (strain LFI1238)</name>
    <dbReference type="NCBI Taxonomy" id="316275"/>
    <lineage>
        <taxon>Bacteria</taxon>
        <taxon>Pseudomonadati</taxon>
        <taxon>Pseudomonadota</taxon>
        <taxon>Gammaproteobacteria</taxon>
        <taxon>Vibrionales</taxon>
        <taxon>Vibrionaceae</taxon>
        <taxon>Aliivibrio</taxon>
    </lineage>
</organism>
<accession>B6EGU1</accession>
<proteinExistence type="inferred from homology"/>
<feature type="chain" id="PRO_1000186022" description="3-ketoacyl-CoA thiolase">
    <location>
        <begin position="1"/>
        <end position="387"/>
    </location>
</feature>
<feature type="active site" description="Acyl-thioester intermediate" evidence="1">
    <location>
        <position position="91"/>
    </location>
</feature>
<feature type="active site" description="Proton acceptor" evidence="1">
    <location>
        <position position="343"/>
    </location>
</feature>
<feature type="active site" description="Proton acceptor" evidence="1">
    <location>
        <position position="373"/>
    </location>
</feature>